<dbReference type="EMBL" id="AB039661">
    <property type="protein sequence ID" value="BAB20770.1"/>
    <property type="molecule type" value="mRNA"/>
</dbReference>
<dbReference type="RefSeq" id="NP_001306351.1">
    <property type="nucleotide sequence ID" value="NM_001319422.1"/>
</dbReference>
<dbReference type="SMR" id="Q9GKY0"/>
<dbReference type="MEROPS" id="I01.967"/>
<dbReference type="GlyCosmos" id="Q9GKY0">
    <property type="glycosylation" value="3 sites, No reported glycans"/>
</dbReference>
<dbReference type="Ensembl" id="ENSMFAT00000025999.2">
    <property type="protein sequence ID" value="ENSMFAP00000007309.2"/>
    <property type="gene ID" value="ENSMFAG00000036133.2"/>
</dbReference>
<dbReference type="eggNOG" id="ENOG502QQAG">
    <property type="taxonomic scope" value="Eukaryota"/>
</dbReference>
<dbReference type="GeneTree" id="ENSGT00940000157784"/>
<dbReference type="Proteomes" id="UP000233100">
    <property type="component" value="Chromosome 2"/>
</dbReference>
<dbReference type="Bgee" id="ENSMFAG00000036133">
    <property type="expression patterns" value="Expressed in heart and 13 other cell types or tissues"/>
</dbReference>
<dbReference type="GO" id="GO:0005615">
    <property type="term" value="C:extracellular space"/>
    <property type="evidence" value="ECO:0007669"/>
    <property type="project" value="TreeGrafter"/>
</dbReference>
<dbReference type="GO" id="GO:0005509">
    <property type="term" value="F:calcium ion binding"/>
    <property type="evidence" value="ECO:0007669"/>
    <property type="project" value="InterPro"/>
</dbReference>
<dbReference type="GO" id="GO:0008201">
    <property type="term" value="F:heparin binding"/>
    <property type="evidence" value="ECO:0007669"/>
    <property type="project" value="UniProtKB-KW"/>
</dbReference>
<dbReference type="GO" id="GO:0045446">
    <property type="term" value="P:endothelial cell differentiation"/>
    <property type="evidence" value="ECO:0000250"/>
    <property type="project" value="UniProtKB"/>
</dbReference>
<dbReference type="GO" id="GO:0043542">
    <property type="term" value="P:endothelial cell migration"/>
    <property type="evidence" value="ECO:0000250"/>
    <property type="project" value="UniProtKB"/>
</dbReference>
<dbReference type="GO" id="GO:0061484">
    <property type="term" value="P:hematopoietic stem cell homeostasis"/>
    <property type="evidence" value="ECO:0007669"/>
    <property type="project" value="Ensembl"/>
</dbReference>
<dbReference type="GO" id="GO:0043066">
    <property type="term" value="P:negative regulation of apoptotic process"/>
    <property type="evidence" value="ECO:0000250"/>
    <property type="project" value="UniProtKB"/>
</dbReference>
<dbReference type="GO" id="GO:0030510">
    <property type="term" value="P:regulation of BMP signaling pathway"/>
    <property type="evidence" value="ECO:0007669"/>
    <property type="project" value="TreeGrafter"/>
</dbReference>
<dbReference type="CDD" id="cd16233">
    <property type="entry name" value="EFh_SPARC_FSTL1"/>
    <property type="match status" value="1"/>
</dbReference>
<dbReference type="CDD" id="cd00104">
    <property type="entry name" value="KAZAL_FS"/>
    <property type="match status" value="1"/>
</dbReference>
<dbReference type="FunFam" id="3.30.60.30:FF:000017">
    <property type="entry name" value="Follistatin like 1"/>
    <property type="match status" value="1"/>
</dbReference>
<dbReference type="Gene3D" id="3.30.60.30">
    <property type="match status" value="1"/>
</dbReference>
<dbReference type="Gene3D" id="1.10.238.10">
    <property type="entry name" value="EF-hand"/>
    <property type="match status" value="1"/>
</dbReference>
<dbReference type="InterPro" id="IPR011992">
    <property type="entry name" value="EF-hand-dom_pair"/>
</dbReference>
<dbReference type="InterPro" id="IPR057020">
    <property type="entry name" value="EF-hand_FSTL1"/>
</dbReference>
<dbReference type="InterPro" id="IPR002048">
    <property type="entry name" value="EF_hand_dom"/>
</dbReference>
<dbReference type="InterPro" id="IPR003645">
    <property type="entry name" value="Fol_N"/>
</dbReference>
<dbReference type="InterPro" id="IPR015369">
    <property type="entry name" value="Follistatin/Osteonectin_EGF"/>
</dbReference>
<dbReference type="InterPro" id="IPR002350">
    <property type="entry name" value="Kazal_dom"/>
</dbReference>
<dbReference type="InterPro" id="IPR036058">
    <property type="entry name" value="Kazal_dom_sf"/>
</dbReference>
<dbReference type="InterPro" id="IPR050653">
    <property type="entry name" value="Prot_Inhib_GrowthFact_Antg"/>
</dbReference>
<dbReference type="PANTHER" id="PTHR10913">
    <property type="entry name" value="FOLLISTATIN-RELATED"/>
    <property type="match status" value="1"/>
</dbReference>
<dbReference type="PANTHER" id="PTHR10913:SF13">
    <property type="entry name" value="FOLLISTATIN-RELATED PROTEIN 1"/>
    <property type="match status" value="1"/>
</dbReference>
<dbReference type="Pfam" id="PF23564">
    <property type="entry name" value="EF-hand_FSTL1"/>
    <property type="match status" value="1"/>
</dbReference>
<dbReference type="Pfam" id="PF09289">
    <property type="entry name" value="FOLN"/>
    <property type="match status" value="1"/>
</dbReference>
<dbReference type="Pfam" id="PF07648">
    <property type="entry name" value="Kazal_2"/>
    <property type="match status" value="1"/>
</dbReference>
<dbReference type="Pfam" id="PF23244">
    <property type="entry name" value="VWF"/>
    <property type="match status" value="1"/>
</dbReference>
<dbReference type="SMART" id="SM00274">
    <property type="entry name" value="FOLN"/>
    <property type="match status" value="1"/>
</dbReference>
<dbReference type="SMART" id="SM00280">
    <property type="entry name" value="KAZAL"/>
    <property type="match status" value="1"/>
</dbReference>
<dbReference type="SUPFAM" id="SSF47473">
    <property type="entry name" value="EF-hand"/>
    <property type="match status" value="1"/>
</dbReference>
<dbReference type="SUPFAM" id="SSF57603">
    <property type="entry name" value="FnI-like domain"/>
    <property type="match status" value="1"/>
</dbReference>
<dbReference type="SUPFAM" id="SSF100895">
    <property type="entry name" value="Kazal-type serine protease inhibitors"/>
    <property type="match status" value="1"/>
</dbReference>
<dbReference type="PROSITE" id="PS50222">
    <property type="entry name" value="EF_HAND_2"/>
    <property type="match status" value="2"/>
</dbReference>
<dbReference type="PROSITE" id="PS51465">
    <property type="entry name" value="KAZAL_2"/>
    <property type="match status" value="1"/>
</dbReference>
<accession>Q9GKY0</accession>
<protein>
    <recommendedName>
        <fullName>Follistatin-related protein 1</fullName>
    </recommendedName>
    <alternativeName>
        <fullName>Follistatin-like protein 1</fullName>
    </alternativeName>
</protein>
<proteinExistence type="evidence at transcript level"/>
<comment type="function">
    <text evidence="1 2">Secreted glycoprotein that is involved in various physiological processes, such as angiogenesis, regulation of the immune response, cell proliferation and differentiation (By similarity). Plays a role in the development of the central nervous system, skeletal system, lungs, and ureter. Promotes endothelial cell survival, migration and differentiation into network structures in an AKT-dependent manner. Also promotes survival of cardiac myocytes (By similarity). Initiates various signaling cascades by activating different receptors on the cell surface such as DIP2A, TLR4 or BMP receptors (By similarity).</text>
</comment>
<comment type="subunit">
    <text evidence="1 2 3">Homodimer (By similarity). Interacts with SCN10A (By similarity). Interacts with DIP2A; DIP2A may act as a cell surface receptor for FSTL1. Interacts with BMP4. Interacts with CD14; this interaction promotes TL4-mediated signaling cascade (By similarity).</text>
</comment>
<comment type="subcellular location">
    <subcellularLocation>
        <location evidence="7">Secreted</location>
    </subcellularLocation>
</comment>
<organism>
    <name type="scientific">Macaca fascicularis</name>
    <name type="common">Crab-eating macaque</name>
    <name type="synonym">Cynomolgus monkey</name>
    <dbReference type="NCBI Taxonomy" id="9541"/>
    <lineage>
        <taxon>Eukaryota</taxon>
        <taxon>Metazoa</taxon>
        <taxon>Chordata</taxon>
        <taxon>Craniata</taxon>
        <taxon>Vertebrata</taxon>
        <taxon>Euteleostomi</taxon>
        <taxon>Mammalia</taxon>
        <taxon>Eutheria</taxon>
        <taxon>Euarchontoglires</taxon>
        <taxon>Primates</taxon>
        <taxon>Haplorrhini</taxon>
        <taxon>Catarrhini</taxon>
        <taxon>Cercopithecidae</taxon>
        <taxon>Cercopithecinae</taxon>
        <taxon>Macaca</taxon>
    </lineage>
</organism>
<name>FSTL1_MACFA</name>
<evidence type="ECO:0000250" key="1">
    <source>
        <dbReference type="UniProtKB" id="Q12841"/>
    </source>
</evidence>
<evidence type="ECO:0000250" key="2">
    <source>
        <dbReference type="UniProtKB" id="Q62356"/>
    </source>
</evidence>
<evidence type="ECO:0000250" key="3">
    <source>
        <dbReference type="UniProtKB" id="Q62632"/>
    </source>
</evidence>
<evidence type="ECO:0000255" key="4"/>
<evidence type="ECO:0000255" key="5">
    <source>
        <dbReference type="PROSITE-ProRule" id="PRU00448"/>
    </source>
</evidence>
<evidence type="ECO:0000255" key="6">
    <source>
        <dbReference type="PROSITE-ProRule" id="PRU00798"/>
    </source>
</evidence>
<evidence type="ECO:0000305" key="7"/>
<gene>
    <name type="primary">FSTL1</name>
    <name type="synonym">OCC1</name>
</gene>
<keyword id="KW-1015">Disulfide bond</keyword>
<keyword id="KW-0325">Glycoprotein</keyword>
<keyword id="KW-0358">Heparin-binding</keyword>
<keyword id="KW-0597">Phosphoprotein</keyword>
<keyword id="KW-1185">Reference proteome</keyword>
<keyword id="KW-0677">Repeat</keyword>
<keyword id="KW-0964">Secreted</keyword>
<keyword id="KW-0732">Signal</keyword>
<feature type="signal peptide" evidence="1">
    <location>
        <begin position="1"/>
        <end position="20"/>
    </location>
</feature>
<feature type="chain" id="PRO_0000010112" description="Follistatin-related protein 1">
    <location>
        <begin position="21"/>
        <end position="308"/>
    </location>
</feature>
<feature type="domain" description="Follistatin-like">
    <location>
        <begin position="30"/>
        <end position="53"/>
    </location>
</feature>
<feature type="domain" description="Kazal-like" evidence="6">
    <location>
        <begin position="48"/>
        <end position="100"/>
    </location>
</feature>
<feature type="domain" description="EF-hand 1" evidence="5">
    <location>
        <begin position="144"/>
        <end position="178"/>
    </location>
</feature>
<feature type="domain" description="EF-hand 2" evidence="5">
    <location>
        <begin position="193"/>
        <end position="228"/>
    </location>
</feature>
<feature type="domain" description="VWFC">
    <location>
        <begin position="233"/>
        <end position="287"/>
    </location>
</feature>
<feature type="modified residue" description="Phosphoserine" evidence="1">
    <location>
        <position position="165"/>
    </location>
</feature>
<feature type="glycosylation site" description="N-linked (GlcNAc...) asparagine" evidence="4">
    <location>
        <position position="144"/>
    </location>
</feature>
<feature type="glycosylation site" description="N-linked (GlcNAc...) asparagine" evidence="4">
    <location>
        <position position="175"/>
    </location>
</feature>
<feature type="glycosylation site" description="N-linked (GlcNAc...) asparagine" evidence="4">
    <location>
        <position position="180"/>
    </location>
</feature>
<feature type="disulfide bond" evidence="2">
    <location>
        <begin position="31"/>
        <end position="42"/>
    </location>
</feature>
<feature type="disulfide bond" evidence="2">
    <location>
        <begin position="36"/>
        <end position="52"/>
    </location>
</feature>
<feature type="disulfide bond" evidence="6">
    <location>
        <begin position="54"/>
        <end position="84"/>
    </location>
</feature>
<feature type="disulfide bond" evidence="6">
    <location>
        <begin position="58"/>
        <end position="77"/>
    </location>
</feature>
<feature type="disulfide bond" evidence="6">
    <location>
        <begin position="66"/>
        <end position="98"/>
    </location>
</feature>
<sequence>MWKRWLALALALVAVAWVRAEEELRSKSKICANVFCGAGRECAVTEKGEPTCLCIEQCKPHKRPVCGSNGKTYLNHCELHRDACLTGSKIQVDYDGHCKEKKSISPSASPVVCYQSNRDELRRRIIQWLEAEIIPDGWFSKGSNYSEILDKYFKNFDNGDSRLDSSEFLKFVEQNETAINITTYPDQENNKLLRGLCVDALIELSDENADWKLSFQEFLKCLNPSFNPPEKKCALEDETYADGAETEVDCNRCVCACGNWVCTAMTCDGKNQKGAQTQTEEEMTRYVQELQKHQETAEKTKRVSTKEI</sequence>
<reference key="1">
    <citation type="journal article" date="2001" name="Eur. J. Neurosci.">
        <title>The occ1 gene is preferentially expressed in the primary visual cortex in an activity-dependent manner: a pattern of gene expression related to the cytoarchitectonic area in adult macaque neocortex.</title>
        <authorList>
            <person name="Tochitani S."/>
            <person name="Liang F."/>
            <person name="Watakabe A."/>
            <person name="Hashikawa T."/>
            <person name="Yamamori T."/>
        </authorList>
    </citation>
    <scope>NUCLEOTIDE SEQUENCE [MRNA]</scope>
    <source>
        <tissue>Brain</tissue>
    </source>
</reference>